<name>ACPXL_RHIME</name>
<keyword id="KW-0963">Cytoplasm</keyword>
<keyword id="KW-0275">Fatty acid biosynthesis</keyword>
<keyword id="KW-0276">Fatty acid metabolism</keyword>
<keyword id="KW-0441">Lipid A biosynthesis</keyword>
<keyword id="KW-0444">Lipid biosynthesis</keyword>
<keyword id="KW-0443">Lipid metabolism</keyword>
<keyword id="KW-0596">Phosphopantetheine</keyword>
<keyword id="KW-0597">Phosphoprotein</keyword>
<keyword id="KW-1185">Reference proteome</keyword>
<dbReference type="EMBL" id="AL591688">
    <property type="protein sequence ID" value="CAC46521.1"/>
    <property type="molecule type" value="Genomic_DNA"/>
</dbReference>
<dbReference type="RefSeq" id="NP_386048.3">
    <property type="nucleotide sequence ID" value="NC_003047.1"/>
</dbReference>
<dbReference type="RefSeq" id="WP_010969581.1">
    <property type="nucleotide sequence ID" value="NC_003047.1"/>
</dbReference>
<dbReference type="SMR" id="Q92P51"/>
<dbReference type="EnsemblBacteria" id="CAC46521">
    <property type="protein sequence ID" value="CAC46521"/>
    <property type="gene ID" value="SMc04278"/>
</dbReference>
<dbReference type="KEGG" id="sme:SMc04278"/>
<dbReference type="PATRIC" id="fig|266834.11.peg.3390"/>
<dbReference type="eggNOG" id="COG0236">
    <property type="taxonomic scope" value="Bacteria"/>
</dbReference>
<dbReference type="HOGENOM" id="CLU_2234373_0_0_5"/>
<dbReference type="OrthoDB" id="9809025at2"/>
<dbReference type="UniPathway" id="UPA00360"/>
<dbReference type="Proteomes" id="UP000001976">
    <property type="component" value="Chromosome"/>
</dbReference>
<dbReference type="GO" id="GO:0005829">
    <property type="term" value="C:cytosol"/>
    <property type="evidence" value="ECO:0007669"/>
    <property type="project" value="TreeGrafter"/>
</dbReference>
<dbReference type="GO" id="GO:0016020">
    <property type="term" value="C:membrane"/>
    <property type="evidence" value="ECO:0007669"/>
    <property type="project" value="GOC"/>
</dbReference>
<dbReference type="GO" id="GO:0000035">
    <property type="term" value="F:acyl binding"/>
    <property type="evidence" value="ECO:0007669"/>
    <property type="project" value="TreeGrafter"/>
</dbReference>
<dbReference type="GO" id="GO:0000036">
    <property type="term" value="F:acyl carrier activity"/>
    <property type="evidence" value="ECO:0007669"/>
    <property type="project" value="TreeGrafter"/>
</dbReference>
<dbReference type="GO" id="GO:0036104">
    <property type="term" value="P:Kdo2-lipid A biosynthetic process"/>
    <property type="evidence" value="ECO:0007669"/>
    <property type="project" value="UniProtKB-UniPathway"/>
</dbReference>
<dbReference type="GO" id="GO:0009245">
    <property type="term" value="P:lipid A biosynthetic process"/>
    <property type="evidence" value="ECO:0007669"/>
    <property type="project" value="UniProtKB-KW"/>
</dbReference>
<dbReference type="Gene3D" id="1.10.1200.10">
    <property type="entry name" value="ACP-like"/>
    <property type="match status" value="1"/>
</dbReference>
<dbReference type="InterPro" id="IPR003231">
    <property type="entry name" value="ACP"/>
</dbReference>
<dbReference type="InterPro" id="IPR036736">
    <property type="entry name" value="ACP-like_sf"/>
</dbReference>
<dbReference type="InterPro" id="IPR009081">
    <property type="entry name" value="PP-bd_ACP"/>
</dbReference>
<dbReference type="InterPro" id="IPR006162">
    <property type="entry name" value="Ppantetheine_attach_site"/>
</dbReference>
<dbReference type="NCBIfam" id="NF005079">
    <property type="entry name" value="PRK06508.1"/>
    <property type="match status" value="1"/>
</dbReference>
<dbReference type="PANTHER" id="PTHR20863">
    <property type="entry name" value="ACYL CARRIER PROTEIN"/>
    <property type="match status" value="1"/>
</dbReference>
<dbReference type="PANTHER" id="PTHR20863:SF76">
    <property type="entry name" value="CARRIER DOMAIN-CONTAINING PROTEIN"/>
    <property type="match status" value="1"/>
</dbReference>
<dbReference type="Pfam" id="PF00550">
    <property type="entry name" value="PP-binding"/>
    <property type="match status" value="1"/>
</dbReference>
<dbReference type="SUPFAM" id="SSF47336">
    <property type="entry name" value="ACP-like"/>
    <property type="match status" value="1"/>
</dbReference>
<dbReference type="PROSITE" id="PS50075">
    <property type="entry name" value="CARRIER"/>
    <property type="match status" value="1"/>
</dbReference>
<dbReference type="PROSITE" id="PS00012">
    <property type="entry name" value="PHOSPHOPANTETHEINE"/>
    <property type="match status" value="1"/>
</dbReference>
<comment type="function">
    <text evidence="1">Carrier of the growing fatty acid chain in fatty acid biosynthesis. Is involved in the transfer of long hydroxylated fatty acids to lipid A (By similarity).</text>
</comment>
<comment type="pathway">
    <text>Glycolipid biosynthesis; KDO(2)-lipid A biosynthesis.</text>
</comment>
<comment type="subcellular location">
    <subcellularLocation>
        <location evidence="1">Cytoplasm</location>
    </subcellularLocation>
</comment>
<comment type="PTM">
    <text evidence="1">4'-phosphopantetheine is transferred from CoA to a specific serine of apo-ACP by AcpS. This modification is essential for activity because fatty acids are bound in thioester linkage to the sulfhydryl of the prosthetic group (By similarity).</text>
</comment>
<feature type="chain" id="PRO_0000180242" description="Acyl carrier protein AcpXL">
    <location>
        <begin position="1"/>
        <end position="95"/>
    </location>
</feature>
<feature type="domain" description="Carrier" evidence="2">
    <location>
        <begin position="4"/>
        <end position="90"/>
    </location>
</feature>
<feature type="modified residue" description="O-(pantetheine 4'-phosphoryl)serine" evidence="2">
    <location>
        <position position="39"/>
    </location>
</feature>
<protein>
    <recommendedName>
        <fullName>Acyl carrier protein AcpXL</fullName>
    </recommendedName>
</protein>
<proteinExistence type="inferred from homology"/>
<organism>
    <name type="scientific">Rhizobium meliloti (strain 1021)</name>
    <name type="common">Ensifer meliloti</name>
    <name type="synonym">Sinorhizobium meliloti</name>
    <dbReference type="NCBI Taxonomy" id="266834"/>
    <lineage>
        <taxon>Bacteria</taxon>
        <taxon>Pseudomonadati</taxon>
        <taxon>Pseudomonadota</taxon>
        <taxon>Alphaproteobacteria</taxon>
        <taxon>Hyphomicrobiales</taxon>
        <taxon>Rhizobiaceae</taxon>
        <taxon>Sinorhizobium/Ensifer group</taxon>
        <taxon>Sinorhizobium</taxon>
    </lineage>
</organism>
<gene>
    <name type="primary">acpXL</name>
    <name type="ordered locus">R01942</name>
    <name type="ORF">SMc04278</name>
</gene>
<sequence>MRVTATFDKVADIIAETSEIDRETIKPESHTIDDLGIDSLDFLDIVFAIDKEFGIKIPLEQWTQEVNEGKVSTEEYFVLKNLCAKIDELRAAKAG</sequence>
<evidence type="ECO:0000250" key="1"/>
<evidence type="ECO:0000255" key="2">
    <source>
        <dbReference type="PROSITE-ProRule" id="PRU00258"/>
    </source>
</evidence>
<reference key="1">
    <citation type="journal article" date="2001" name="Proc. Natl. Acad. Sci. U.S.A.">
        <title>Analysis of the chromosome sequence of the legume symbiont Sinorhizobium meliloti strain 1021.</title>
        <authorList>
            <person name="Capela D."/>
            <person name="Barloy-Hubler F."/>
            <person name="Gouzy J."/>
            <person name="Bothe G."/>
            <person name="Ampe F."/>
            <person name="Batut J."/>
            <person name="Boistard P."/>
            <person name="Becker A."/>
            <person name="Boutry M."/>
            <person name="Cadieu E."/>
            <person name="Dreano S."/>
            <person name="Gloux S."/>
            <person name="Godrie T."/>
            <person name="Goffeau A."/>
            <person name="Kahn D."/>
            <person name="Kiss E."/>
            <person name="Lelaure V."/>
            <person name="Masuy D."/>
            <person name="Pohl T."/>
            <person name="Portetelle D."/>
            <person name="Puehler A."/>
            <person name="Purnelle B."/>
            <person name="Ramsperger U."/>
            <person name="Renard C."/>
            <person name="Thebault P."/>
            <person name="Vandenbol M."/>
            <person name="Weidner S."/>
            <person name="Galibert F."/>
        </authorList>
    </citation>
    <scope>NUCLEOTIDE SEQUENCE [LARGE SCALE GENOMIC DNA]</scope>
    <source>
        <strain>1021</strain>
    </source>
</reference>
<reference key="2">
    <citation type="journal article" date="2001" name="Science">
        <title>The composite genome of the legume symbiont Sinorhizobium meliloti.</title>
        <authorList>
            <person name="Galibert F."/>
            <person name="Finan T.M."/>
            <person name="Long S.R."/>
            <person name="Puehler A."/>
            <person name="Abola P."/>
            <person name="Ampe F."/>
            <person name="Barloy-Hubler F."/>
            <person name="Barnett M.J."/>
            <person name="Becker A."/>
            <person name="Boistard P."/>
            <person name="Bothe G."/>
            <person name="Boutry M."/>
            <person name="Bowser L."/>
            <person name="Buhrmester J."/>
            <person name="Cadieu E."/>
            <person name="Capela D."/>
            <person name="Chain P."/>
            <person name="Cowie A."/>
            <person name="Davis R.W."/>
            <person name="Dreano S."/>
            <person name="Federspiel N.A."/>
            <person name="Fisher R.F."/>
            <person name="Gloux S."/>
            <person name="Godrie T."/>
            <person name="Goffeau A."/>
            <person name="Golding B."/>
            <person name="Gouzy J."/>
            <person name="Gurjal M."/>
            <person name="Hernandez-Lucas I."/>
            <person name="Hong A."/>
            <person name="Huizar L."/>
            <person name="Hyman R.W."/>
            <person name="Jones T."/>
            <person name="Kahn D."/>
            <person name="Kahn M.L."/>
            <person name="Kalman S."/>
            <person name="Keating D.H."/>
            <person name="Kiss E."/>
            <person name="Komp C."/>
            <person name="Lelaure V."/>
            <person name="Masuy D."/>
            <person name="Palm C."/>
            <person name="Peck M.C."/>
            <person name="Pohl T.M."/>
            <person name="Portetelle D."/>
            <person name="Purnelle B."/>
            <person name="Ramsperger U."/>
            <person name="Surzycki R."/>
            <person name="Thebault P."/>
            <person name="Vandenbol M."/>
            <person name="Vorhoelter F.J."/>
            <person name="Weidner S."/>
            <person name="Wells D.H."/>
            <person name="Wong K."/>
            <person name="Yeh K.-C."/>
            <person name="Batut J."/>
        </authorList>
    </citation>
    <scope>NUCLEOTIDE SEQUENCE [LARGE SCALE GENOMIC DNA]</scope>
    <source>
        <strain>1021</strain>
    </source>
</reference>
<accession>Q92P51</accession>